<dbReference type="EMBL" id="CP001287">
    <property type="protein sequence ID" value="ACK66610.1"/>
    <property type="molecule type" value="Genomic_DNA"/>
</dbReference>
<dbReference type="RefSeq" id="WP_012595877.1">
    <property type="nucleotide sequence ID" value="NC_011726.1"/>
</dbReference>
<dbReference type="SMR" id="B7K4V4"/>
<dbReference type="STRING" id="41431.PCC8801_2606"/>
<dbReference type="KEGG" id="cyp:PCC8801_2606"/>
<dbReference type="eggNOG" id="COG0292">
    <property type="taxonomic scope" value="Bacteria"/>
</dbReference>
<dbReference type="HOGENOM" id="CLU_123265_0_1_3"/>
<dbReference type="OrthoDB" id="9808966at2"/>
<dbReference type="Proteomes" id="UP000008204">
    <property type="component" value="Chromosome"/>
</dbReference>
<dbReference type="GO" id="GO:1990904">
    <property type="term" value="C:ribonucleoprotein complex"/>
    <property type="evidence" value="ECO:0007669"/>
    <property type="project" value="UniProtKB-KW"/>
</dbReference>
<dbReference type="GO" id="GO:0005840">
    <property type="term" value="C:ribosome"/>
    <property type="evidence" value="ECO:0007669"/>
    <property type="project" value="UniProtKB-KW"/>
</dbReference>
<dbReference type="GO" id="GO:0019843">
    <property type="term" value="F:rRNA binding"/>
    <property type="evidence" value="ECO:0007669"/>
    <property type="project" value="UniProtKB-UniRule"/>
</dbReference>
<dbReference type="GO" id="GO:0003735">
    <property type="term" value="F:structural constituent of ribosome"/>
    <property type="evidence" value="ECO:0007669"/>
    <property type="project" value="InterPro"/>
</dbReference>
<dbReference type="GO" id="GO:0000027">
    <property type="term" value="P:ribosomal large subunit assembly"/>
    <property type="evidence" value="ECO:0007669"/>
    <property type="project" value="UniProtKB-UniRule"/>
</dbReference>
<dbReference type="GO" id="GO:0006412">
    <property type="term" value="P:translation"/>
    <property type="evidence" value="ECO:0007669"/>
    <property type="project" value="InterPro"/>
</dbReference>
<dbReference type="CDD" id="cd07026">
    <property type="entry name" value="Ribosomal_L20"/>
    <property type="match status" value="1"/>
</dbReference>
<dbReference type="FunFam" id="1.10.1900.20:FF:000001">
    <property type="entry name" value="50S ribosomal protein L20"/>
    <property type="match status" value="1"/>
</dbReference>
<dbReference type="Gene3D" id="6.10.160.10">
    <property type="match status" value="1"/>
</dbReference>
<dbReference type="Gene3D" id="1.10.1900.20">
    <property type="entry name" value="Ribosomal protein L20"/>
    <property type="match status" value="1"/>
</dbReference>
<dbReference type="HAMAP" id="MF_00382">
    <property type="entry name" value="Ribosomal_bL20"/>
    <property type="match status" value="1"/>
</dbReference>
<dbReference type="InterPro" id="IPR005813">
    <property type="entry name" value="Ribosomal_bL20"/>
</dbReference>
<dbReference type="InterPro" id="IPR049946">
    <property type="entry name" value="RIBOSOMAL_L20_CS"/>
</dbReference>
<dbReference type="InterPro" id="IPR035566">
    <property type="entry name" value="Ribosomal_protein_bL20_C"/>
</dbReference>
<dbReference type="NCBIfam" id="TIGR01032">
    <property type="entry name" value="rplT_bact"/>
    <property type="match status" value="1"/>
</dbReference>
<dbReference type="PANTHER" id="PTHR10986">
    <property type="entry name" value="39S RIBOSOMAL PROTEIN L20"/>
    <property type="match status" value="1"/>
</dbReference>
<dbReference type="Pfam" id="PF00453">
    <property type="entry name" value="Ribosomal_L20"/>
    <property type="match status" value="1"/>
</dbReference>
<dbReference type="PRINTS" id="PR00062">
    <property type="entry name" value="RIBOSOMALL20"/>
</dbReference>
<dbReference type="SUPFAM" id="SSF74731">
    <property type="entry name" value="Ribosomal protein L20"/>
    <property type="match status" value="1"/>
</dbReference>
<dbReference type="PROSITE" id="PS00937">
    <property type="entry name" value="RIBOSOMAL_L20"/>
    <property type="match status" value="1"/>
</dbReference>
<evidence type="ECO:0000255" key="1">
    <source>
        <dbReference type="HAMAP-Rule" id="MF_00382"/>
    </source>
</evidence>
<evidence type="ECO:0000305" key="2"/>
<proteinExistence type="inferred from homology"/>
<feature type="chain" id="PRO_1000122303" description="Large ribosomal subunit protein bL20">
    <location>
        <begin position="1"/>
        <end position="117"/>
    </location>
</feature>
<accession>B7K4V4</accession>
<keyword id="KW-1185">Reference proteome</keyword>
<keyword id="KW-0687">Ribonucleoprotein</keyword>
<keyword id="KW-0689">Ribosomal protein</keyword>
<keyword id="KW-0694">RNA-binding</keyword>
<keyword id="KW-0699">rRNA-binding</keyword>
<sequence>MTRVKRGNVARKRRKKVLKLAKGFRGSHSKLFRTANQQVMKALRNAYRDRRKRKRDFRRLWITRINAAARVHGISYSKLTGQLKKANIELNRKMLAQLAILDPQAFAKVVETANAAQ</sequence>
<reference key="1">
    <citation type="journal article" date="2011" name="MBio">
        <title>Novel metabolic attributes of the genus Cyanothece, comprising a group of unicellular nitrogen-fixing Cyanobacteria.</title>
        <authorList>
            <person name="Bandyopadhyay A."/>
            <person name="Elvitigala T."/>
            <person name="Welsh E."/>
            <person name="Stockel J."/>
            <person name="Liberton M."/>
            <person name="Min H."/>
            <person name="Sherman L.A."/>
            <person name="Pakrasi H.B."/>
        </authorList>
    </citation>
    <scope>NUCLEOTIDE SEQUENCE [LARGE SCALE GENOMIC DNA]</scope>
    <source>
        <strain>PCC 8801 / RF-1</strain>
    </source>
</reference>
<protein>
    <recommendedName>
        <fullName evidence="1">Large ribosomal subunit protein bL20</fullName>
    </recommendedName>
    <alternativeName>
        <fullName evidence="2">50S ribosomal protein L20</fullName>
    </alternativeName>
</protein>
<organism>
    <name type="scientific">Rippkaea orientalis (strain PCC 8801 / RF-1)</name>
    <name type="common">Cyanothece sp. (strain PCC 8801)</name>
    <dbReference type="NCBI Taxonomy" id="41431"/>
    <lineage>
        <taxon>Bacteria</taxon>
        <taxon>Bacillati</taxon>
        <taxon>Cyanobacteriota</taxon>
        <taxon>Cyanophyceae</taxon>
        <taxon>Oscillatoriophycideae</taxon>
        <taxon>Chroococcales</taxon>
        <taxon>Aphanothecaceae</taxon>
        <taxon>Rippkaea</taxon>
        <taxon>Rippkaea orientalis</taxon>
    </lineage>
</organism>
<comment type="function">
    <text evidence="1">Binds directly to 23S ribosomal RNA and is necessary for the in vitro assembly process of the 50S ribosomal subunit. It is not involved in the protein synthesizing functions of that subunit.</text>
</comment>
<comment type="similarity">
    <text evidence="1">Belongs to the bacterial ribosomal protein bL20 family.</text>
</comment>
<gene>
    <name evidence="1" type="primary">rplT</name>
    <name evidence="1" type="synonym">rpl20</name>
    <name type="ordered locus">PCC8801_2606</name>
</gene>
<name>RL20_RIPO1</name>